<dbReference type="EC" id="2.3.1.275" evidence="1"/>
<dbReference type="EMBL" id="AP008226">
    <property type="protein sequence ID" value="BAD71026.1"/>
    <property type="molecule type" value="Genomic_DNA"/>
</dbReference>
<dbReference type="RefSeq" id="WP_011228511.1">
    <property type="nucleotide sequence ID" value="NC_006461.1"/>
</dbReference>
<dbReference type="RefSeq" id="YP_144469.1">
    <property type="nucleotide sequence ID" value="NC_006461.1"/>
</dbReference>
<dbReference type="SMR" id="Q5SJ11"/>
<dbReference type="EnsemblBacteria" id="BAD71026">
    <property type="protein sequence ID" value="BAD71026"/>
    <property type="gene ID" value="BAD71026"/>
</dbReference>
<dbReference type="GeneID" id="3169051"/>
<dbReference type="KEGG" id="ttj:TTHA1203"/>
<dbReference type="PATRIC" id="fig|300852.9.peg.1184"/>
<dbReference type="eggNOG" id="COG0344">
    <property type="taxonomic scope" value="Bacteria"/>
</dbReference>
<dbReference type="HOGENOM" id="CLU_081254_0_0_0"/>
<dbReference type="PhylomeDB" id="Q5SJ11"/>
<dbReference type="UniPathway" id="UPA00085"/>
<dbReference type="Proteomes" id="UP000000532">
    <property type="component" value="Chromosome"/>
</dbReference>
<dbReference type="GO" id="GO:0005886">
    <property type="term" value="C:plasma membrane"/>
    <property type="evidence" value="ECO:0007669"/>
    <property type="project" value="UniProtKB-SubCell"/>
</dbReference>
<dbReference type="GO" id="GO:0043772">
    <property type="term" value="F:acyl-phosphate glycerol-3-phosphate acyltransferase activity"/>
    <property type="evidence" value="ECO:0007669"/>
    <property type="project" value="UniProtKB-UniRule"/>
</dbReference>
<dbReference type="GO" id="GO:0008654">
    <property type="term" value="P:phospholipid biosynthetic process"/>
    <property type="evidence" value="ECO:0007669"/>
    <property type="project" value="UniProtKB-UniRule"/>
</dbReference>
<dbReference type="HAMAP" id="MF_01043">
    <property type="entry name" value="PlsY"/>
    <property type="match status" value="1"/>
</dbReference>
<dbReference type="InterPro" id="IPR003811">
    <property type="entry name" value="G3P_acylTferase_PlsY"/>
</dbReference>
<dbReference type="NCBIfam" id="TIGR00023">
    <property type="entry name" value="glycerol-3-phosphate 1-O-acyltransferase PlsY"/>
    <property type="match status" value="1"/>
</dbReference>
<dbReference type="PANTHER" id="PTHR30309:SF0">
    <property type="entry name" value="GLYCEROL-3-PHOSPHATE ACYLTRANSFERASE-RELATED"/>
    <property type="match status" value="1"/>
</dbReference>
<dbReference type="PANTHER" id="PTHR30309">
    <property type="entry name" value="INNER MEMBRANE PROTEIN YGIH"/>
    <property type="match status" value="1"/>
</dbReference>
<dbReference type="Pfam" id="PF02660">
    <property type="entry name" value="G3P_acyltransf"/>
    <property type="match status" value="1"/>
</dbReference>
<dbReference type="SMART" id="SM01207">
    <property type="entry name" value="G3P_acyltransf"/>
    <property type="match status" value="1"/>
</dbReference>
<keyword id="KW-0997">Cell inner membrane</keyword>
<keyword id="KW-1003">Cell membrane</keyword>
<keyword id="KW-0444">Lipid biosynthesis</keyword>
<keyword id="KW-0443">Lipid metabolism</keyword>
<keyword id="KW-0472">Membrane</keyword>
<keyword id="KW-0594">Phospholipid biosynthesis</keyword>
<keyword id="KW-1208">Phospholipid metabolism</keyword>
<keyword id="KW-1185">Reference proteome</keyword>
<keyword id="KW-0808">Transferase</keyword>
<keyword id="KW-0812">Transmembrane</keyword>
<keyword id="KW-1133">Transmembrane helix</keyword>
<accession>Q5SJ11</accession>
<proteinExistence type="inferred from homology"/>
<comment type="function">
    <text evidence="1">Catalyzes the transfer of an acyl group from acyl-phosphate (acyl-PO(4)) to glycerol-3-phosphate (G3P) to form lysophosphatidic acid (LPA). This enzyme utilizes acyl-phosphate as fatty acyl donor, but not acyl-CoA or acyl-ACP.</text>
</comment>
<comment type="catalytic activity">
    <reaction evidence="1">
        <text>an acyl phosphate + sn-glycerol 3-phosphate = a 1-acyl-sn-glycero-3-phosphate + phosphate</text>
        <dbReference type="Rhea" id="RHEA:34075"/>
        <dbReference type="ChEBI" id="CHEBI:43474"/>
        <dbReference type="ChEBI" id="CHEBI:57597"/>
        <dbReference type="ChEBI" id="CHEBI:57970"/>
        <dbReference type="ChEBI" id="CHEBI:59918"/>
        <dbReference type="EC" id="2.3.1.275"/>
    </reaction>
</comment>
<comment type="pathway">
    <text evidence="1">Lipid metabolism; phospholipid metabolism.</text>
</comment>
<comment type="subunit">
    <text evidence="1">Probably interacts with PlsX.</text>
</comment>
<comment type="subcellular location">
    <subcellularLocation>
        <location evidence="1">Cell inner membrane</location>
        <topology evidence="1">Multi-pass membrane protein</topology>
    </subcellularLocation>
</comment>
<comment type="similarity">
    <text evidence="1">Belongs to the PlsY family.</text>
</comment>
<reference key="1">
    <citation type="submission" date="2004-11" db="EMBL/GenBank/DDBJ databases">
        <title>Complete genome sequence of Thermus thermophilus HB8.</title>
        <authorList>
            <person name="Masui R."/>
            <person name="Kurokawa K."/>
            <person name="Nakagawa N."/>
            <person name="Tokunaga F."/>
            <person name="Koyama Y."/>
            <person name="Shibata T."/>
            <person name="Oshima T."/>
            <person name="Yokoyama S."/>
            <person name="Yasunaga T."/>
            <person name="Kuramitsu S."/>
        </authorList>
    </citation>
    <scope>NUCLEOTIDE SEQUENCE [LARGE SCALE GENOMIC DNA]</scope>
    <source>
        <strain>ATCC 27634 / DSM 579 / HB8</strain>
    </source>
</reference>
<gene>
    <name evidence="1" type="primary">plsY</name>
    <name type="ordered locus">TTHA1203</name>
</gene>
<sequence length="199" mass="21401">MTAAVWTLLLAYLFGSVPAGVLVARTYGVDLRKVGSGNIGATNVLRALGWGPALVVAFFDVFKGGIAVLVARAFGLSDWMLGGVALMAVLGHNYSVFLRFRGGKGVATSFGTLLFLDPVLALWTFPIGLSVILLTRYVSAGSMTGGVAAFVLSLALGRPLWEVATVFLMALLIFWTHRENLKRLREGTERRLGERVEAR</sequence>
<evidence type="ECO:0000255" key="1">
    <source>
        <dbReference type="HAMAP-Rule" id="MF_01043"/>
    </source>
</evidence>
<name>PLSY_THET8</name>
<feature type="chain" id="PRO_0000188482" description="Glycerol-3-phosphate acyltransferase">
    <location>
        <begin position="1"/>
        <end position="199"/>
    </location>
</feature>
<feature type="transmembrane region" description="Helical" evidence="1">
    <location>
        <begin position="3"/>
        <end position="23"/>
    </location>
</feature>
<feature type="transmembrane region" description="Helical" evidence="1">
    <location>
        <begin position="50"/>
        <end position="70"/>
    </location>
</feature>
<feature type="transmembrane region" description="Helical" evidence="1">
    <location>
        <begin position="78"/>
        <end position="98"/>
    </location>
</feature>
<feature type="transmembrane region" description="Helical" evidence="1">
    <location>
        <begin position="113"/>
        <end position="133"/>
    </location>
</feature>
<feature type="transmembrane region" description="Helical" evidence="1">
    <location>
        <begin position="154"/>
        <end position="174"/>
    </location>
</feature>
<protein>
    <recommendedName>
        <fullName evidence="1">Glycerol-3-phosphate acyltransferase</fullName>
    </recommendedName>
    <alternativeName>
        <fullName evidence="1">Acyl-PO4 G3P acyltransferase</fullName>
    </alternativeName>
    <alternativeName>
        <fullName evidence="1">Acyl-phosphate--glycerol-3-phosphate acyltransferase</fullName>
    </alternativeName>
    <alternativeName>
        <fullName evidence="1">G3P acyltransferase</fullName>
        <shortName evidence="1">GPAT</shortName>
        <ecNumber evidence="1">2.3.1.275</ecNumber>
    </alternativeName>
    <alternativeName>
        <fullName evidence="1">Lysophosphatidic acid synthase</fullName>
        <shortName evidence="1">LPA synthase</shortName>
    </alternativeName>
</protein>
<organism>
    <name type="scientific">Thermus thermophilus (strain ATCC 27634 / DSM 579 / HB8)</name>
    <dbReference type="NCBI Taxonomy" id="300852"/>
    <lineage>
        <taxon>Bacteria</taxon>
        <taxon>Thermotogati</taxon>
        <taxon>Deinococcota</taxon>
        <taxon>Deinococci</taxon>
        <taxon>Thermales</taxon>
        <taxon>Thermaceae</taxon>
        <taxon>Thermus</taxon>
    </lineage>
</organism>